<evidence type="ECO:0000255" key="1">
    <source>
        <dbReference type="HAMAP-Rule" id="MF_01218"/>
    </source>
</evidence>
<proteinExistence type="inferred from homology"/>
<sequence>MGKLYVFDHPLIQHKITYIRDKNTGTKDFRELVDEVASLMAFEITRDLPLKDIEIETPVSKATTKVIAGKKLGLIPILRAGLGMVDGILKLIPAAKVGHVGLYRDPKTLQPVEYYVKLPTDVEERDFIVLDPMLATGGSAAEAINSLKKRGAKQIKLMCIVAAPEGVKVVQEEHPDVDIYVAALDEKLNDHGYVVPGLGDAGDRLFGTK</sequence>
<gene>
    <name evidence="1" type="primary">upp</name>
    <name type="ordered locus">BT9727_4997</name>
</gene>
<name>UPP_BACHK</name>
<feature type="chain" id="PRO_0000120799" description="Uracil phosphoribosyltransferase">
    <location>
        <begin position="1"/>
        <end position="209"/>
    </location>
</feature>
<feature type="binding site" evidence="1">
    <location>
        <position position="79"/>
    </location>
    <ligand>
        <name>5-phospho-alpha-D-ribose 1-diphosphate</name>
        <dbReference type="ChEBI" id="CHEBI:58017"/>
    </ligand>
</feature>
<feature type="binding site" evidence="1">
    <location>
        <position position="104"/>
    </location>
    <ligand>
        <name>5-phospho-alpha-D-ribose 1-diphosphate</name>
        <dbReference type="ChEBI" id="CHEBI:58017"/>
    </ligand>
</feature>
<feature type="binding site" evidence="1">
    <location>
        <begin position="131"/>
        <end position="139"/>
    </location>
    <ligand>
        <name>5-phospho-alpha-D-ribose 1-diphosphate</name>
        <dbReference type="ChEBI" id="CHEBI:58017"/>
    </ligand>
</feature>
<feature type="binding site" evidence="1">
    <location>
        <position position="194"/>
    </location>
    <ligand>
        <name>uracil</name>
        <dbReference type="ChEBI" id="CHEBI:17568"/>
    </ligand>
</feature>
<feature type="binding site" evidence="1">
    <location>
        <begin position="199"/>
        <end position="201"/>
    </location>
    <ligand>
        <name>uracil</name>
        <dbReference type="ChEBI" id="CHEBI:17568"/>
    </ligand>
</feature>
<feature type="binding site" evidence="1">
    <location>
        <position position="200"/>
    </location>
    <ligand>
        <name>5-phospho-alpha-D-ribose 1-diphosphate</name>
        <dbReference type="ChEBI" id="CHEBI:58017"/>
    </ligand>
</feature>
<dbReference type="EC" id="2.4.2.9" evidence="1"/>
<dbReference type="EMBL" id="AE017355">
    <property type="protein sequence ID" value="AAT62612.1"/>
    <property type="molecule type" value="Genomic_DNA"/>
</dbReference>
<dbReference type="RefSeq" id="WP_000517539.1">
    <property type="nucleotide sequence ID" value="NC_005957.1"/>
</dbReference>
<dbReference type="RefSeq" id="YP_039306.1">
    <property type="nucleotide sequence ID" value="NC_005957.1"/>
</dbReference>
<dbReference type="SMR" id="Q6HAX0"/>
<dbReference type="GeneID" id="93005808"/>
<dbReference type="KEGG" id="btk:BT9727_4997"/>
<dbReference type="PATRIC" id="fig|281309.8.peg.5315"/>
<dbReference type="HOGENOM" id="CLU_067096_2_2_9"/>
<dbReference type="UniPathway" id="UPA00574">
    <property type="reaction ID" value="UER00636"/>
</dbReference>
<dbReference type="Proteomes" id="UP000001301">
    <property type="component" value="Chromosome"/>
</dbReference>
<dbReference type="GO" id="GO:0005525">
    <property type="term" value="F:GTP binding"/>
    <property type="evidence" value="ECO:0007669"/>
    <property type="project" value="UniProtKB-KW"/>
</dbReference>
<dbReference type="GO" id="GO:0000287">
    <property type="term" value="F:magnesium ion binding"/>
    <property type="evidence" value="ECO:0007669"/>
    <property type="project" value="UniProtKB-UniRule"/>
</dbReference>
<dbReference type="GO" id="GO:0004845">
    <property type="term" value="F:uracil phosphoribosyltransferase activity"/>
    <property type="evidence" value="ECO:0007669"/>
    <property type="project" value="UniProtKB-UniRule"/>
</dbReference>
<dbReference type="GO" id="GO:0044206">
    <property type="term" value="P:UMP salvage"/>
    <property type="evidence" value="ECO:0007669"/>
    <property type="project" value="UniProtKB-UniRule"/>
</dbReference>
<dbReference type="GO" id="GO:0006223">
    <property type="term" value="P:uracil salvage"/>
    <property type="evidence" value="ECO:0007669"/>
    <property type="project" value="InterPro"/>
</dbReference>
<dbReference type="CDD" id="cd06223">
    <property type="entry name" value="PRTases_typeI"/>
    <property type="match status" value="1"/>
</dbReference>
<dbReference type="FunFam" id="3.40.50.2020:FF:000003">
    <property type="entry name" value="Uracil phosphoribosyltransferase"/>
    <property type="match status" value="1"/>
</dbReference>
<dbReference type="Gene3D" id="3.40.50.2020">
    <property type="match status" value="1"/>
</dbReference>
<dbReference type="HAMAP" id="MF_01218_B">
    <property type="entry name" value="Upp_B"/>
    <property type="match status" value="1"/>
</dbReference>
<dbReference type="InterPro" id="IPR000836">
    <property type="entry name" value="PRibTrfase_dom"/>
</dbReference>
<dbReference type="InterPro" id="IPR029057">
    <property type="entry name" value="PRTase-like"/>
</dbReference>
<dbReference type="InterPro" id="IPR034332">
    <property type="entry name" value="Upp_B"/>
</dbReference>
<dbReference type="InterPro" id="IPR050054">
    <property type="entry name" value="UPRTase/APRTase"/>
</dbReference>
<dbReference type="InterPro" id="IPR005765">
    <property type="entry name" value="Ura_phspho_trans"/>
</dbReference>
<dbReference type="NCBIfam" id="NF001097">
    <property type="entry name" value="PRK00129.1"/>
    <property type="match status" value="1"/>
</dbReference>
<dbReference type="NCBIfam" id="TIGR01091">
    <property type="entry name" value="upp"/>
    <property type="match status" value="1"/>
</dbReference>
<dbReference type="PANTHER" id="PTHR32315">
    <property type="entry name" value="ADENINE PHOSPHORIBOSYLTRANSFERASE"/>
    <property type="match status" value="1"/>
</dbReference>
<dbReference type="PANTHER" id="PTHR32315:SF4">
    <property type="entry name" value="URACIL PHOSPHORIBOSYLTRANSFERASE, CHLOROPLASTIC"/>
    <property type="match status" value="1"/>
</dbReference>
<dbReference type="Pfam" id="PF14681">
    <property type="entry name" value="UPRTase"/>
    <property type="match status" value="1"/>
</dbReference>
<dbReference type="SUPFAM" id="SSF53271">
    <property type="entry name" value="PRTase-like"/>
    <property type="match status" value="1"/>
</dbReference>
<accession>Q6HAX0</accession>
<protein>
    <recommendedName>
        <fullName evidence="1">Uracil phosphoribosyltransferase</fullName>
        <ecNumber evidence="1">2.4.2.9</ecNumber>
    </recommendedName>
    <alternativeName>
        <fullName evidence="1">UMP pyrophosphorylase</fullName>
    </alternativeName>
    <alternativeName>
        <fullName evidence="1">UPRTase</fullName>
    </alternativeName>
</protein>
<comment type="function">
    <text evidence="1">Catalyzes the conversion of uracil and 5-phospho-alpha-D-ribose 1-diphosphate (PRPP) to UMP and diphosphate.</text>
</comment>
<comment type="catalytic activity">
    <reaction evidence="1">
        <text>UMP + diphosphate = 5-phospho-alpha-D-ribose 1-diphosphate + uracil</text>
        <dbReference type="Rhea" id="RHEA:13017"/>
        <dbReference type="ChEBI" id="CHEBI:17568"/>
        <dbReference type="ChEBI" id="CHEBI:33019"/>
        <dbReference type="ChEBI" id="CHEBI:57865"/>
        <dbReference type="ChEBI" id="CHEBI:58017"/>
        <dbReference type="EC" id="2.4.2.9"/>
    </reaction>
</comment>
<comment type="cofactor">
    <cofactor evidence="1">
        <name>Mg(2+)</name>
        <dbReference type="ChEBI" id="CHEBI:18420"/>
    </cofactor>
    <text evidence="1">Binds 1 Mg(2+) ion per subunit. The magnesium is bound as Mg-PRPP.</text>
</comment>
<comment type="activity regulation">
    <text evidence="1">Allosterically activated by GTP.</text>
</comment>
<comment type="pathway">
    <text evidence="1">Pyrimidine metabolism; UMP biosynthesis via salvage pathway; UMP from uracil: step 1/1.</text>
</comment>
<comment type="similarity">
    <text evidence="1">Belongs to the UPRTase family.</text>
</comment>
<organism>
    <name type="scientific">Bacillus thuringiensis subsp. konkukian (strain 97-27)</name>
    <dbReference type="NCBI Taxonomy" id="281309"/>
    <lineage>
        <taxon>Bacteria</taxon>
        <taxon>Bacillati</taxon>
        <taxon>Bacillota</taxon>
        <taxon>Bacilli</taxon>
        <taxon>Bacillales</taxon>
        <taxon>Bacillaceae</taxon>
        <taxon>Bacillus</taxon>
        <taxon>Bacillus cereus group</taxon>
    </lineage>
</organism>
<reference key="1">
    <citation type="journal article" date="2006" name="J. Bacteriol.">
        <title>Pathogenomic sequence analysis of Bacillus cereus and Bacillus thuringiensis isolates closely related to Bacillus anthracis.</title>
        <authorList>
            <person name="Han C.S."/>
            <person name="Xie G."/>
            <person name="Challacombe J.F."/>
            <person name="Altherr M.R."/>
            <person name="Bhotika S.S."/>
            <person name="Bruce D."/>
            <person name="Campbell C.S."/>
            <person name="Campbell M.L."/>
            <person name="Chen J."/>
            <person name="Chertkov O."/>
            <person name="Cleland C."/>
            <person name="Dimitrijevic M."/>
            <person name="Doggett N.A."/>
            <person name="Fawcett J.J."/>
            <person name="Glavina T."/>
            <person name="Goodwin L.A."/>
            <person name="Hill K.K."/>
            <person name="Hitchcock P."/>
            <person name="Jackson P.J."/>
            <person name="Keim P."/>
            <person name="Kewalramani A.R."/>
            <person name="Longmire J."/>
            <person name="Lucas S."/>
            <person name="Malfatti S."/>
            <person name="McMurry K."/>
            <person name="Meincke L.J."/>
            <person name="Misra M."/>
            <person name="Moseman B.L."/>
            <person name="Mundt M."/>
            <person name="Munk A.C."/>
            <person name="Okinaka R.T."/>
            <person name="Parson-Quintana B."/>
            <person name="Reilly L.P."/>
            <person name="Richardson P."/>
            <person name="Robinson D.L."/>
            <person name="Rubin E."/>
            <person name="Saunders E."/>
            <person name="Tapia R."/>
            <person name="Tesmer J.G."/>
            <person name="Thayer N."/>
            <person name="Thompson L.S."/>
            <person name="Tice H."/>
            <person name="Ticknor L.O."/>
            <person name="Wills P.L."/>
            <person name="Brettin T.S."/>
            <person name="Gilna P."/>
        </authorList>
    </citation>
    <scope>NUCLEOTIDE SEQUENCE [LARGE SCALE GENOMIC DNA]</scope>
    <source>
        <strain>97-27</strain>
    </source>
</reference>
<keyword id="KW-0021">Allosteric enzyme</keyword>
<keyword id="KW-0328">Glycosyltransferase</keyword>
<keyword id="KW-0342">GTP-binding</keyword>
<keyword id="KW-0460">Magnesium</keyword>
<keyword id="KW-0547">Nucleotide-binding</keyword>
<keyword id="KW-0808">Transferase</keyword>